<keyword id="KW-0007">Acetylation</keyword>
<keyword id="KW-0010">Activator</keyword>
<keyword id="KW-0112">Calmodulin-binding</keyword>
<keyword id="KW-0963">Cytoplasm</keyword>
<keyword id="KW-0221">Differentiation</keyword>
<keyword id="KW-0238">DNA-binding</keyword>
<keyword id="KW-0539">Nucleus</keyword>
<keyword id="KW-0678">Repressor</keyword>
<keyword id="KW-0726">Sexual differentiation</keyword>
<keyword id="KW-0804">Transcription</keyword>
<keyword id="KW-0805">Transcription regulation</keyword>
<organism>
    <name type="scientific">Bison bonasus</name>
    <name type="common">European bison</name>
    <dbReference type="NCBI Taxonomy" id="9902"/>
    <lineage>
        <taxon>Eukaryota</taxon>
        <taxon>Metazoa</taxon>
        <taxon>Chordata</taxon>
        <taxon>Craniata</taxon>
        <taxon>Vertebrata</taxon>
        <taxon>Euteleostomi</taxon>
        <taxon>Mammalia</taxon>
        <taxon>Eutheria</taxon>
        <taxon>Laurasiatheria</taxon>
        <taxon>Artiodactyla</taxon>
        <taxon>Ruminantia</taxon>
        <taxon>Pecora</taxon>
        <taxon>Bovidae</taxon>
        <taxon>Bovinae</taxon>
        <taxon>Bison</taxon>
    </lineage>
</organism>
<proteinExistence type="inferred from homology"/>
<feature type="chain" id="PRO_0000048643" description="Sex-determining region Y protein">
    <location>
        <begin position="1"/>
        <end position="229"/>
    </location>
</feature>
<feature type="DNA-binding region" description="HMG box" evidence="3">
    <location>
        <begin position="54"/>
        <end position="122"/>
    </location>
</feature>
<feature type="region of interest" description="Disordered" evidence="4">
    <location>
        <begin position="32"/>
        <end position="52"/>
    </location>
</feature>
<feature type="compositionally biased region" description="Basic and acidic residues" evidence="4">
    <location>
        <begin position="39"/>
        <end position="52"/>
    </location>
</feature>
<feature type="sequence conflict" description="In Ref. 1; CAA82976." evidence="5" ref="1">
    <original>C</original>
    <variation>Y</variation>
    <location>
        <position position="224"/>
    </location>
</feature>
<sequence>MFRVLNDDVYSPAVVQQQTTLAFRKDSSLCTDSHSANDQCERGEHVRESSQDHVKRPMNAFIVWSRERRRKVALENPKMKNSDISKQLGYEWKRLTDAEKRPFFEEAQRLLAIHRDKYPGYKYRPRRRAKRPQKSLPADSSILCNPMHVETLHPFTYRDGCAKTTYSQMESQLSRSQSVIITNSLLQKEHHSSWTSLGHNKVTLATRISADFPFNKSLEPGLSCAYFQY</sequence>
<gene>
    <name type="primary">SRY</name>
    <name type="synonym">TDF</name>
</gene>
<comment type="function">
    <text evidence="1 2">Transcriptional regulator that controls a genetic switch in male development. It is necessary and sufficient for initiating male sex determination by directing the development of supporting cell precursors (pre-Sertoli cells) as Sertoli rather than granulosa cells. Involved in different aspects of gene regulation including promoter activation or repression. Binds to the DNA consensus sequence 5'-[AT]AACAA[AT]-3'. SRY HMG box recognizes DNA by partial intercalation in the minor groove and promotes DNA bending. Also involved in pre-mRNA splicing (By similarity). In male adult brain involved in the maintenance of motor functions of dopaminergic neurons (By similarity).</text>
</comment>
<comment type="subunit">
    <text evidence="2">Interacts with CALM, EP300, HDAC3, KPNB1, ZNF208 isoform KRAB-O, PARP1, SLC9A3R2 and WT1. The interaction with EP300 modulates its DNA-binding activity. The interaction with KPNB1 is sensitive to dissociation by Ran in the GTP-bound form. Interaction with PARP1 impaired its DNA-binding activity.</text>
</comment>
<comment type="subcellular location">
    <subcellularLocation>
        <location evidence="2">Nucleus speckle</location>
    </subcellularLocation>
    <subcellularLocation>
        <location evidence="2">Cytoplasm</location>
    </subcellularLocation>
    <subcellularLocation>
        <location evidence="2">Nucleus</location>
    </subcellularLocation>
</comment>
<comment type="PTM">
    <text evidence="2">Acetylation of Lys-130 contributes to its nuclear localization and enhances its interaction with KPNB1. Deacetylated by HDAC3.</text>
</comment>
<comment type="similarity">
    <text evidence="5">Belongs to the SRY family.</text>
</comment>
<comment type="online information" name="Protein Spotlight">
    <link uri="https://www.proteinspotlight.org/back_issues/080"/>
    <text>The tenuous nature of sex - Issue 80 of March 2007</text>
</comment>
<protein>
    <recommendedName>
        <fullName>Sex-determining region Y protein</fullName>
    </recommendedName>
    <alternativeName>
        <fullName>Testis-determining factor</fullName>
    </alternativeName>
</protein>
<evidence type="ECO:0000250" key="1">
    <source>
        <dbReference type="UniProtKB" id="P36394"/>
    </source>
</evidence>
<evidence type="ECO:0000250" key="2">
    <source>
        <dbReference type="UniProtKB" id="Q05066"/>
    </source>
</evidence>
<evidence type="ECO:0000255" key="3">
    <source>
        <dbReference type="PROSITE-ProRule" id="PRU00267"/>
    </source>
</evidence>
<evidence type="ECO:0000256" key="4">
    <source>
        <dbReference type="SAM" id="MobiDB-lite"/>
    </source>
</evidence>
<evidence type="ECO:0000305" key="5"/>
<accession>Q27949</accession>
<accession>Q8SPF6</accession>
<dbReference type="EMBL" id="Z30321">
    <property type="protein sequence ID" value="CAA82976.1"/>
    <property type="molecule type" value="Genomic_DNA"/>
</dbReference>
<dbReference type="EMBL" id="AY079142">
    <property type="protein sequence ID" value="AAL86543.1"/>
    <property type="molecule type" value="Genomic_DNA"/>
</dbReference>
<dbReference type="PIR" id="I45833">
    <property type="entry name" value="I45833"/>
</dbReference>
<dbReference type="SMR" id="Q27949"/>
<dbReference type="GO" id="GO:0005737">
    <property type="term" value="C:cytoplasm"/>
    <property type="evidence" value="ECO:0007669"/>
    <property type="project" value="UniProtKB-SubCell"/>
</dbReference>
<dbReference type="GO" id="GO:0016607">
    <property type="term" value="C:nuclear speck"/>
    <property type="evidence" value="ECO:0007669"/>
    <property type="project" value="UniProtKB-SubCell"/>
</dbReference>
<dbReference type="GO" id="GO:0005634">
    <property type="term" value="C:nucleus"/>
    <property type="evidence" value="ECO:0000250"/>
    <property type="project" value="UniProtKB"/>
</dbReference>
<dbReference type="GO" id="GO:0005516">
    <property type="term" value="F:calmodulin binding"/>
    <property type="evidence" value="ECO:0007669"/>
    <property type="project" value="UniProtKB-KW"/>
</dbReference>
<dbReference type="GO" id="GO:0001228">
    <property type="term" value="F:DNA-binding transcription activator activity, RNA polymerase II-specific"/>
    <property type="evidence" value="ECO:0007669"/>
    <property type="project" value="TreeGrafter"/>
</dbReference>
<dbReference type="GO" id="GO:0000978">
    <property type="term" value="F:RNA polymerase II cis-regulatory region sequence-specific DNA binding"/>
    <property type="evidence" value="ECO:0007669"/>
    <property type="project" value="TreeGrafter"/>
</dbReference>
<dbReference type="GO" id="GO:0030154">
    <property type="term" value="P:cell differentiation"/>
    <property type="evidence" value="ECO:0007669"/>
    <property type="project" value="UniProtKB-KW"/>
</dbReference>
<dbReference type="GO" id="GO:0030238">
    <property type="term" value="P:male sex determination"/>
    <property type="evidence" value="ECO:0007669"/>
    <property type="project" value="InterPro"/>
</dbReference>
<dbReference type="GO" id="GO:0007548">
    <property type="term" value="P:sex differentiation"/>
    <property type="evidence" value="ECO:0007669"/>
    <property type="project" value="UniProtKB-KW"/>
</dbReference>
<dbReference type="CDD" id="cd22034">
    <property type="entry name" value="HMG-box_SoxA_SRY"/>
    <property type="match status" value="1"/>
</dbReference>
<dbReference type="FunFam" id="1.10.30.10:FF:000002">
    <property type="entry name" value="transcription factor Sox-2"/>
    <property type="match status" value="1"/>
</dbReference>
<dbReference type="Gene3D" id="1.10.30.10">
    <property type="entry name" value="High mobility group box domain"/>
    <property type="match status" value="1"/>
</dbReference>
<dbReference type="InterPro" id="IPR009071">
    <property type="entry name" value="HMG_box_dom"/>
</dbReference>
<dbReference type="InterPro" id="IPR036910">
    <property type="entry name" value="HMG_box_dom_sf"/>
</dbReference>
<dbReference type="InterPro" id="IPR017253">
    <property type="entry name" value="SRY"/>
</dbReference>
<dbReference type="InterPro" id="IPR050140">
    <property type="entry name" value="SRY-related_HMG-box_TF-like"/>
</dbReference>
<dbReference type="PANTHER" id="PTHR10270:SF161">
    <property type="entry name" value="SEX-DETERMINING REGION Y PROTEIN"/>
    <property type="match status" value="1"/>
</dbReference>
<dbReference type="PANTHER" id="PTHR10270">
    <property type="entry name" value="SOX TRANSCRIPTION FACTOR"/>
    <property type="match status" value="1"/>
</dbReference>
<dbReference type="Pfam" id="PF00505">
    <property type="entry name" value="HMG_box"/>
    <property type="match status" value="1"/>
</dbReference>
<dbReference type="PIRSF" id="PIRSF037653">
    <property type="entry name" value="SRY"/>
    <property type="match status" value="1"/>
</dbReference>
<dbReference type="SMART" id="SM00398">
    <property type="entry name" value="HMG"/>
    <property type="match status" value="1"/>
</dbReference>
<dbReference type="SUPFAM" id="SSF47095">
    <property type="entry name" value="HMG-box"/>
    <property type="match status" value="1"/>
</dbReference>
<dbReference type="PROSITE" id="PS50118">
    <property type="entry name" value="HMG_BOX_2"/>
    <property type="match status" value="1"/>
</dbReference>
<reference key="1">
    <citation type="journal article" date="1994" name="Mamm. Genome">
        <title>Sequence evolution of SRY gene within Bovidae family.</title>
        <authorList>
            <person name="Payen E.J."/>
            <person name="Cotinot C.Y."/>
        </authorList>
    </citation>
    <scope>NUCLEOTIDE SEQUENCE [GENOMIC DNA]</scope>
</reference>
<reference key="2">
    <citation type="journal article" date="2004" name="Mol. Biol. Evol.">
        <title>Maternal and paternal lineages in cross-breeding bovine species. Has wisent a hybrid origin?</title>
        <authorList>
            <person name="Verkaar E.L.C."/>
            <person name="Nijman I.J."/>
            <person name="Beeke M."/>
            <person name="Hanekamp E."/>
            <person name="Lenstra J.A."/>
        </authorList>
    </citation>
    <scope>NUCLEOTIDE SEQUENCE [GENOMIC DNA]</scope>
</reference>
<name>SRY_BISBO</name>